<evidence type="ECO:0000250" key="1"/>
<evidence type="ECO:0000250" key="2">
    <source>
        <dbReference type="UniProtKB" id="Q6AXY9"/>
    </source>
</evidence>
<evidence type="ECO:0000255" key="3"/>
<evidence type="ECO:0000256" key="4">
    <source>
        <dbReference type="SAM" id="MobiDB-lite"/>
    </source>
</evidence>
<evidence type="ECO:0000269" key="5">
    <source>
    </source>
</evidence>
<evidence type="ECO:0000269" key="6">
    <source>
    </source>
</evidence>
<evidence type="ECO:0000269" key="7">
    <source>
    </source>
</evidence>
<evidence type="ECO:0000269" key="8">
    <source>
    </source>
</evidence>
<evidence type="ECO:0000269" key="9">
    <source ref="4"/>
</evidence>
<evidence type="ECO:0000305" key="10"/>
<organism>
    <name type="scientific">Homo sapiens</name>
    <name type="common">Human</name>
    <dbReference type="NCBI Taxonomy" id="9606"/>
    <lineage>
        <taxon>Eukaryota</taxon>
        <taxon>Metazoa</taxon>
        <taxon>Chordata</taxon>
        <taxon>Craniata</taxon>
        <taxon>Vertebrata</taxon>
        <taxon>Euteleostomi</taxon>
        <taxon>Mammalia</taxon>
        <taxon>Eutheria</taxon>
        <taxon>Euarchontoglires</taxon>
        <taxon>Primates</taxon>
        <taxon>Haplorrhini</taxon>
        <taxon>Catarrhini</taxon>
        <taxon>Hominidae</taxon>
        <taxon>Homo</taxon>
    </lineage>
</organism>
<protein>
    <recommendedName>
        <fullName>Spermatogenic leucine zipper protein 1</fullName>
    </recommendedName>
    <alternativeName>
        <fullName>Testis-specific protein 1</fullName>
    </alternativeName>
    <alternativeName>
        <fullName>Testis-specific protein NYD-TSP1</fullName>
    </alternativeName>
</protein>
<keyword id="KW-0175">Coiled coil</keyword>
<keyword id="KW-0963">Cytoplasm</keyword>
<keyword id="KW-0238">DNA-binding</keyword>
<keyword id="KW-0539">Nucleus</keyword>
<keyword id="KW-0597">Phosphoprotein</keyword>
<keyword id="KW-1185">Reference proteome</keyword>
<keyword id="KW-0804">Transcription</keyword>
<keyword id="KW-0805">Transcription regulation</keyword>
<accession>Q9BXG8</accession>
<accession>B2RA21</accession>
<accession>Q8N4P1</accession>
<accession>Q8N7E9</accession>
<name>SPZ1_HUMAN</name>
<comment type="function">
    <text evidence="1">Transcription factor that binds to the DNA sequence 5'-CANNTG-3'(E box) and the G-box motif. May play an important role in the regulation of cell proliferation and differentiation during spermatogenesis (By similarity).</text>
</comment>
<comment type="subunit">
    <text evidence="1">Interacts with PPP1CC isoform gamma-2.</text>
</comment>
<comment type="interaction">
    <interactant intactId="EBI-8483734">
        <id>Q9BXG8</id>
    </interactant>
    <interactant intactId="EBI-740402">
        <id>O60941</id>
        <label>DTNB</label>
    </interactant>
    <organismsDiffer>false</organismsDiffer>
    <experiments>4</experiments>
</comment>
<comment type="interaction">
    <interactant intactId="EBI-8483734">
        <id>Q9BXG8</id>
    </interactant>
    <interactant intactId="EBI-11984733">
        <id>O60941-5</id>
        <label>DTNB</label>
    </interactant>
    <organismsDiffer>false</organismsDiffer>
    <experiments>5</experiments>
</comment>
<comment type="interaction">
    <interactant intactId="EBI-8483734">
        <id>Q9BXG8</id>
    </interactant>
    <interactant intactId="EBI-1058922">
        <id>O95714</id>
        <label>HERC2</label>
    </interactant>
    <organismsDiffer>false</organismsDiffer>
    <experiments>3</experiments>
</comment>
<comment type="subcellular location">
    <subcellularLocation>
        <location evidence="1">Cytoplasm</location>
    </subcellularLocation>
    <subcellularLocation>
        <location evidence="1">Nucleus</location>
    </subcellularLocation>
</comment>
<comment type="tissue specificity">
    <text evidence="5 8">Specifically and strongly expressed in the testis. Expressed in several tumor cell lines.</text>
</comment>
<comment type="PTM">
    <text evidence="1">Phosphorylated by MAPK1/ERK2 and MAPK3/ERK1.</text>
</comment>
<comment type="miscellaneous">
    <text evidence="1">The helix-loop-helix and basic motifs form a SPZ1 specific bHLH different from the classical one.</text>
</comment>
<comment type="sequence caution" evidence="10">
    <conflict type="miscellaneous discrepancy">
        <sequence resource="EMBL-CDS" id="BAC05340"/>
    </conflict>
    <text>Probable cloning artifact.</text>
</comment>
<feature type="chain" id="PRO_0000280507" description="Spermatogenic leucine zipper protein 1">
    <location>
        <begin position="1"/>
        <end position="430"/>
    </location>
</feature>
<feature type="region of interest" description="Disordered" evidence="4">
    <location>
        <begin position="1"/>
        <end position="25"/>
    </location>
</feature>
<feature type="region of interest" description="Helix-loop-helix motif" evidence="3">
    <location>
        <begin position="166"/>
        <end position="177"/>
    </location>
</feature>
<feature type="region of interest" description="Basic motif" evidence="3">
    <location>
        <begin position="178"/>
        <end position="244"/>
    </location>
</feature>
<feature type="region of interest" description="Leucine-zipper">
    <location>
        <begin position="303"/>
        <end position="324"/>
    </location>
</feature>
<feature type="coiled-coil region" evidence="3">
    <location>
        <begin position="62"/>
        <end position="102"/>
    </location>
</feature>
<feature type="coiled-coil region" evidence="3">
    <location>
        <begin position="214"/>
        <end position="269"/>
    </location>
</feature>
<feature type="coiled-coil region" evidence="3">
    <location>
        <begin position="316"/>
        <end position="351"/>
    </location>
</feature>
<feature type="modified residue" description="Phosphoserine" evidence="2">
    <location>
        <position position="107"/>
    </location>
</feature>
<feature type="modified residue" description="Phosphoserine" evidence="2">
    <location>
        <position position="258"/>
    </location>
</feature>
<feature type="sequence variant" id="VAR_031160" description="In dbSNP:rs1862136." evidence="5 6 7 9">
    <original>V</original>
    <variation>L</variation>
    <location>
        <position position="17"/>
    </location>
</feature>
<feature type="sequence variant" id="VAR_031161" description="In dbSNP:rs6867419.">
    <original>E</original>
    <variation>K</variation>
    <location>
        <position position="302"/>
    </location>
</feature>
<feature type="sequence conflict" description="In Ref. 1; AAK17995." evidence="10" ref="1">
    <original>P</original>
    <variation>S</variation>
    <location>
        <position position="30"/>
    </location>
</feature>
<feature type="sequence conflict" description="In Ref. 1; AAK17995." evidence="10" ref="1">
    <original>H</original>
    <variation>P</variation>
    <location>
        <position position="301"/>
    </location>
</feature>
<feature type="sequence conflict" description="In Ref. 2; BAC05340." evidence="10" ref="2">
    <original>K</original>
    <variation>N</variation>
    <location>
        <position position="380"/>
    </location>
</feature>
<gene>
    <name type="primary">SPZ1</name>
    <name type="synonym">TSP1</name>
</gene>
<sequence>MASSAKSAEMPTISKTVNPTPDPHQEYLDPRITIALFEIGSHSPSSWGSLPFLKNSSHQVTEQQTAQKFNNLLKEIKDILKNMAGFEEKITEAKELFEETNITEDVSAHKENIRGLDKINEMLSTNLPVSLAPEKEDNEKKQEMILETNITEDVSAHKENIRGLDKINEMLSTNLPVSLAPEKEDNEKKQQMIMENQNSENTAQVFARDLVNRLEEKKVLNETQQSQEKAKNRLNVQEETMKIRNNMEQLLQEAEHWSKQHTELSKLIKSYQKSQKDISETLGNNGVGFQTQPNNEVSAKHELEEQVKKLSHDTYSLQLMAALLENECQILQQRVEILKELHHQKQGTLQEKPIQINYKQDKKNQKPSEAKKVEMYKQNKQAMKGTFWKKDRSCRSLDVCLNKKACNTQFNIHVARKALRGKMRSASSLR</sequence>
<reference key="1">
    <citation type="journal article" date="2003" name="Asian J. Androl.">
        <title>Expression of a novel bHLH-Zip gene in human testis.</title>
        <authorList>
            <person name="Sha J.-H."/>
            <person name="Zhou Z.-M."/>
            <person name="Li J.-M."/>
            <person name="Lin M."/>
            <person name="Zhu H."/>
            <person name="Zhu H."/>
            <person name="Zhou Y.-D."/>
            <person name="Wang L.-L."/>
            <person name="Wang Y.-Q."/>
            <person name="Zhou K.-Y."/>
        </authorList>
    </citation>
    <scope>NUCLEOTIDE SEQUENCE [MRNA]</scope>
    <scope>TISSUE SPECIFICITY</scope>
    <scope>VARIANT LEU-17</scope>
    <source>
        <tissue>Testis</tissue>
    </source>
</reference>
<reference key="2">
    <citation type="journal article" date="2004" name="Nat. Genet.">
        <title>Complete sequencing and characterization of 21,243 full-length human cDNAs.</title>
        <authorList>
            <person name="Ota T."/>
            <person name="Suzuki Y."/>
            <person name="Nishikawa T."/>
            <person name="Otsuki T."/>
            <person name="Sugiyama T."/>
            <person name="Irie R."/>
            <person name="Wakamatsu A."/>
            <person name="Hayashi K."/>
            <person name="Sato H."/>
            <person name="Nagai K."/>
            <person name="Kimura K."/>
            <person name="Makita H."/>
            <person name="Sekine M."/>
            <person name="Obayashi M."/>
            <person name="Nishi T."/>
            <person name="Shibahara T."/>
            <person name="Tanaka T."/>
            <person name="Ishii S."/>
            <person name="Yamamoto J."/>
            <person name="Saito K."/>
            <person name="Kawai Y."/>
            <person name="Isono Y."/>
            <person name="Nakamura Y."/>
            <person name="Nagahari K."/>
            <person name="Murakami K."/>
            <person name="Yasuda T."/>
            <person name="Iwayanagi T."/>
            <person name="Wagatsuma M."/>
            <person name="Shiratori A."/>
            <person name="Sudo H."/>
            <person name="Hosoiri T."/>
            <person name="Kaku Y."/>
            <person name="Kodaira H."/>
            <person name="Kondo H."/>
            <person name="Sugawara M."/>
            <person name="Takahashi M."/>
            <person name="Kanda K."/>
            <person name="Yokoi T."/>
            <person name="Furuya T."/>
            <person name="Kikkawa E."/>
            <person name="Omura Y."/>
            <person name="Abe K."/>
            <person name="Kamihara K."/>
            <person name="Katsuta N."/>
            <person name="Sato K."/>
            <person name="Tanikawa M."/>
            <person name="Yamazaki M."/>
            <person name="Ninomiya K."/>
            <person name="Ishibashi T."/>
            <person name="Yamashita H."/>
            <person name="Murakawa K."/>
            <person name="Fujimori K."/>
            <person name="Tanai H."/>
            <person name="Kimata M."/>
            <person name="Watanabe M."/>
            <person name="Hiraoka S."/>
            <person name="Chiba Y."/>
            <person name="Ishida S."/>
            <person name="Ono Y."/>
            <person name="Takiguchi S."/>
            <person name="Watanabe S."/>
            <person name="Yosida M."/>
            <person name="Hotuta T."/>
            <person name="Kusano J."/>
            <person name="Kanehori K."/>
            <person name="Takahashi-Fujii A."/>
            <person name="Hara H."/>
            <person name="Tanase T.-O."/>
            <person name="Nomura Y."/>
            <person name="Togiya S."/>
            <person name="Komai F."/>
            <person name="Hara R."/>
            <person name="Takeuchi K."/>
            <person name="Arita M."/>
            <person name="Imose N."/>
            <person name="Musashino K."/>
            <person name="Yuuki H."/>
            <person name="Oshima A."/>
            <person name="Sasaki N."/>
            <person name="Aotsuka S."/>
            <person name="Yoshikawa Y."/>
            <person name="Matsunawa H."/>
            <person name="Ichihara T."/>
            <person name="Shiohata N."/>
            <person name="Sano S."/>
            <person name="Moriya S."/>
            <person name="Momiyama H."/>
            <person name="Satoh N."/>
            <person name="Takami S."/>
            <person name="Terashima Y."/>
            <person name="Suzuki O."/>
            <person name="Nakagawa S."/>
            <person name="Senoh A."/>
            <person name="Mizoguchi H."/>
            <person name="Goto Y."/>
            <person name="Shimizu F."/>
            <person name="Wakebe H."/>
            <person name="Hishigaki H."/>
            <person name="Watanabe T."/>
            <person name="Sugiyama A."/>
            <person name="Takemoto M."/>
            <person name="Kawakami B."/>
            <person name="Yamazaki M."/>
            <person name="Watanabe K."/>
            <person name="Kumagai A."/>
            <person name="Itakura S."/>
            <person name="Fukuzumi Y."/>
            <person name="Fujimori Y."/>
            <person name="Komiyama M."/>
            <person name="Tashiro H."/>
            <person name="Tanigami A."/>
            <person name="Fujiwara T."/>
            <person name="Ono T."/>
            <person name="Yamada K."/>
            <person name="Fujii Y."/>
            <person name="Ozaki K."/>
            <person name="Hirao M."/>
            <person name="Ohmori Y."/>
            <person name="Kawabata A."/>
            <person name="Hikiji T."/>
            <person name="Kobatake N."/>
            <person name="Inagaki H."/>
            <person name="Ikema Y."/>
            <person name="Okamoto S."/>
            <person name="Okitani R."/>
            <person name="Kawakami T."/>
            <person name="Noguchi S."/>
            <person name="Itoh T."/>
            <person name="Shigeta K."/>
            <person name="Senba T."/>
            <person name="Matsumura K."/>
            <person name="Nakajima Y."/>
            <person name="Mizuno T."/>
            <person name="Morinaga M."/>
            <person name="Sasaki M."/>
            <person name="Togashi T."/>
            <person name="Oyama M."/>
            <person name="Hata H."/>
            <person name="Watanabe M."/>
            <person name="Komatsu T."/>
            <person name="Mizushima-Sugano J."/>
            <person name="Satoh T."/>
            <person name="Shirai Y."/>
            <person name="Takahashi Y."/>
            <person name="Nakagawa K."/>
            <person name="Okumura K."/>
            <person name="Nagase T."/>
            <person name="Nomura N."/>
            <person name="Kikuchi H."/>
            <person name="Masuho Y."/>
            <person name="Yamashita R."/>
            <person name="Nakai K."/>
            <person name="Yada T."/>
            <person name="Nakamura Y."/>
            <person name="Ohara O."/>
            <person name="Isogai T."/>
            <person name="Sugano S."/>
        </authorList>
    </citation>
    <scope>NUCLEOTIDE SEQUENCE [LARGE SCALE MRNA]</scope>
    <scope>VARIANT LEU-17</scope>
    <source>
        <tissue>Testis</tissue>
    </source>
</reference>
<reference key="3">
    <citation type="journal article" date="2004" name="Nature">
        <title>The DNA sequence and comparative analysis of human chromosome 5.</title>
        <authorList>
            <person name="Schmutz J."/>
            <person name="Martin J."/>
            <person name="Terry A."/>
            <person name="Couronne O."/>
            <person name="Grimwood J."/>
            <person name="Lowry S."/>
            <person name="Gordon L.A."/>
            <person name="Scott D."/>
            <person name="Xie G."/>
            <person name="Huang W."/>
            <person name="Hellsten U."/>
            <person name="Tran-Gyamfi M."/>
            <person name="She X."/>
            <person name="Prabhakar S."/>
            <person name="Aerts A."/>
            <person name="Altherr M."/>
            <person name="Bajorek E."/>
            <person name="Black S."/>
            <person name="Branscomb E."/>
            <person name="Caoile C."/>
            <person name="Challacombe J.F."/>
            <person name="Chan Y.M."/>
            <person name="Denys M."/>
            <person name="Detter J.C."/>
            <person name="Escobar J."/>
            <person name="Flowers D."/>
            <person name="Fotopulos D."/>
            <person name="Glavina T."/>
            <person name="Gomez M."/>
            <person name="Gonzales E."/>
            <person name="Goodstein D."/>
            <person name="Grigoriev I."/>
            <person name="Groza M."/>
            <person name="Hammon N."/>
            <person name="Hawkins T."/>
            <person name="Haydu L."/>
            <person name="Israni S."/>
            <person name="Jett J."/>
            <person name="Kadner K."/>
            <person name="Kimball H."/>
            <person name="Kobayashi A."/>
            <person name="Lopez F."/>
            <person name="Lou Y."/>
            <person name="Martinez D."/>
            <person name="Medina C."/>
            <person name="Morgan J."/>
            <person name="Nandkeshwar R."/>
            <person name="Noonan J.P."/>
            <person name="Pitluck S."/>
            <person name="Pollard M."/>
            <person name="Predki P."/>
            <person name="Priest J."/>
            <person name="Ramirez L."/>
            <person name="Retterer J."/>
            <person name="Rodriguez A."/>
            <person name="Rogers S."/>
            <person name="Salamov A."/>
            <person name="Salazar A."/>
            <person name="Thayer N."/>
            <person name="Tice H."/>
            <person name="Tsai M."/>
            <person name="Ustaszewska A."/>
            <person name="Vo N."/>
            <person name="Wheeler J."/>
            <person name="Wu K."/>
            <person name="Yang J."/>
            <person name="Dickson M."/>
            <person name="Cheng J.-F."/>
            <person name="Eichler E.E."/>
            <person name="Olsen A."/>
            <person name="Pennacchio L.A."/>
            <person name="Rokhsar D.S."/>
            <person name="Richardson P."/>
            <person name="Lucas S.M."/>
            <person name="Myers R.M."/>
            <person name="Rubin E.M."/>
        </authorList>
    </citation>
    <scope>NUCLEOTIDE SEQUENCE [LARGE SCALE GENOMIC DNA]</scope>
</reference>
<reference key="4">
    <citation type="submission" date="2005-07" db="EMBL/GenBank/DDBJ databases">
        <authorList>
            <person name="Mural R.J."/>
            <person name="Istrail S."/>
            <person name="Sutton G.G."/>
            <person name="Florea L."/>
            <person name="Halpern A.L."/>
            <person name="Mobarry C.M."/>
            <person name="Lippert R."/>
            <person name="Walenz B."/>
            <person name="Shatkay H."/>
            <person name="Dew I."/>
            <person name="Miller J.R."/>
            <person name="Flanigan M.J."/>
            <person name="Edwards N.J."/>
            <person name="Bolanos R."/>
            <person name="Fasulo D."/>
            <person name="Halldorsson B.V."/>
            <person name="Hannenhalli S."/>
            <person name="Turner R."/>
            <person name="Yooseph S."/>
            <person name="Lu F."/>
            <person name="Nusskern D.R."/>
            <person name="Shue B.C."/>
            <person name="Zheng X.H."/>
            <person name="Zhong F."/>
            <person name="Delcher A.L."/>
            <person name="Huson D.H."/>
            <person name="Kravitz S.A."/>
            <person name="Mouchard L."/>
            <person name="Reinert K."/>
            <person name="Remington K.A."/>
            <person name="Clark A.G."/>
            <person name="Waterman M.S."/>
            <person name="Eichler E.E."/>
            <person name="Adams M.D."/>
            <person name="Hunkapiller M.W."/>
            <person name="Myers E.W."/>
            <person name="Venter J.C."/>
        </authorList>
    </citation>
    <scope>NUCLEOTIDE SEQUENCE [LARGE SCALE GENOMIC DNA]</scope>
    <scope>VARIANT LEU-17</scope>
</reference>
<reference key="5">
    <citation type="journal article" date="2004" name="Genome Res.">
        <title>The status, quality, and expansion of the NIH full-length cDNA project: the Mammalian Gene Collection (MGC).</title>
        <authorList>
            <consortium name="The MGC Project Team"/>
        </authorList>
    </citation>
    <scope>NUCLEOTIDE SEQUENCE [LARGE SCALE MRNA]</scope>
    <scope>VARIANT LEU-17</scope>
    <source>
        <tissue>Brain</tissue>
    </source>
</reference>
<reference key="6">
    <citation type="journal article" date="2005" name="Cancer Res.">
        <title>bHLH-zip transcription factor Spz1 mediates mitogen-activated protein kinase cell proliferation, transformation, and tumorigenesis.</title>
        <authorList>
            <person name="Hsu S.-H."/>
            <person name="Hsieh-Li H.-M."/>
            <person name="Huang H.-Y."/>
            <person name="Huang P.-H."/>
            <person name="Li H."/>
        </authorList>
    </citation>
    <scope>TISSUE SPECIFICITY</scope>
</reference>
<proteinExistence type="evidence at protein level"/>
<dbReference type="EMBL" id="AF333098">
    <property type="protein sequence ID" value="AAK17995.1"/>
    <property type="molecule type" value="mRNA"/>
</dbReference>
<dbReference type="EMBL" id="AK098575">
    <property type="protein sequence ID" value="BAC05340.1"/>
    <property type="status" value="ALT_SEQ"/>
    <property type="molecule type" value="mRNA"/>
</dbReference>
<dbReference type="EMBL" id="AK314007">
    <property type="protein sequence ID" value="BAG36718.1"/>
    <property type="molecule type" value="mRNA"/>
</dbReference>
<dbReference type="EMBL" id="AC026410">
    <property type="status" value="NOT_ANNOTATED_CDS"/>
    <property type="molecule type" value="Genomic_DNA"/>
</dbReference>
<dbReference type="EMBL" id="CH471084">
    <property type="protein sequence ID" value="EAW95848.1"/>
    <property type="molecule type" value="Genomic_DNA"/>
</dbReference>
<dbReference type="EMBL" id="BC033798">
    <property type="protein sequence ID" value="AAH33798.1"/>
    <property type="molecule type" value="mRNA"/>
</dbReference>
<dbReference type="CCDS" id="CCDS43336.1"/>
<dbReference type="RefSeq" id="NP_115956.3">
    <property type="nucleotide sequence ID" value="NM_032567.3"/>
</dbReference>
<dbReference type="SMR" id="Q9BXG8"/>
<dbReference type="BioGRID" id="124175">
    <property type="interactions" value="19"/>
</dbReference>
<dbReference type="FunCoup" id="Q9BXG8">
    <property type="interactions" value="37"/>
</dbReference>
<dbReference type="IntAct" id="Q9BXG8">
    <property type="interactions" value="17"/>
</dbReference>
<dbReference type="MINT" id="Q9BXG8"/>
<dbReference type="STRING" id="9606.ENSP00000369611"/>
<dbReference type="GlyGen" id="Q9BXG8">
    <property type="glycosylation" value="2 sites, 1 O-linked glycan (1 site)"/>
</dbReference>
<dbReference type="iPTMnet" id="Q9BXG8"/>
<dbReference type="PhosphoSitePlus" id="Q9BXG8"/>
<dbReference type="BioMuta" id="SPZ1"/>
<dbReference type="DMDM" id="134035034"/>
<dbReference type="jPOST" id="Q9BXG8"/>
<dbReference type="MassIVE" id="Q9BXG8"/>
<dbReference type="PaxDb" id="9606-ENSP00000369611"/>
<dbReference type="Antibodypedia" id="44374">
    <property type="antibodies" value="114 antibodies from 24 providers"/>
</dbReference>
<dbReference type="DNASU" id="84654"/>
<dbReference type="Ensembl" id="ENST00000296739.6">
    <property type="protein sequence ID" value="ENSP00000369611.3"/>
    <property type="gene ID" value="ENSG00000164299.7"/>
</dbReference>
<dbReference type="GeneID" id="84654"/>
<dbReference type="KEGG" id="hsa:84654"/>
<dbReference type="MANE-Select" id="ENST00000296739.6">
    <property type="protein sequence ID" value="ENSP00000369611.3"/>
    <property type="RefSeq nucleotide sequence ID" value="NM_032567.4"/>
    <property type="RefSeq protein sequence ID" value="NP_115956.3"/>
</dbReference>
<dbReference type="UCSC" id="uc003kgn.4">
    <property type="organism name" value="human"/>
</dbReference>
<dbReference type="AGR" id="HGNC:30721"/>
<dbReference type="CTD" id="84654"/>
<dbReference type="DisGeNET" id="84654"/>
<dbReference type="GeneCards" id="SPZ1"/>
<dbReference type="HGNC" id="HGNC:30721">
    <property type="gene designation" value="SPZ1"/>
</dbReference>
<dbReference type="HPA" id="ENSG00000164299">
    <property type="expression patterns" value="Tissue enriched (testis)"/>
</dbReference>
<dbReference type="MIM" id="618068">
    <property type="type" value="gene"/>
</dbReference>
<dbReference type="neXtProt" id="NX_Q9BXG8"/>
<dbReference type="OpenTargets" id="ENSG00000164299"/>
<dbReference type="PharmGKB" id="PA142670869"/>
<dbReference type="VEuPathDB" id="HostDB:ENSG00000164299"/>
<dbReference type="eggNOG" id="ENOG502QS87">
    <property type="taxonomic scope" value="Eukaryota"/>
</dbReference>
<dbReference type="GeneTree" id="ENSGT00950000182767"/>
<dbReference type="HOGENOM" id="CLU_062447_0_0_1"/>
<dbReference type="InParanoid" id="Q9BXG8"/>
<dbReference type="OMA" id="ECQILEQ"/>
<dbReference type="OrthoDB" id="9830670at2759"/>
<dbReference type="PAN-GO" id="Q9BXG8">
    <property type="GO annotations" value="1 GO annotation based on evolutionary models"/>
</dbReference>
<dbReference type="PhylomeDB" id="Q9BXG8"/>
<dbReference type="TreeFam" id="TF337798"/>
<dbReference type="PathwayCommons" id="Q9BXG8"/>
<dbReference type="SignaLink" id="Q9BXG8"/>
<dbReference type="BioGRID-ORCS" id="84654">
    <property type="hits" value="9 hits in 1160 CRISPR screens"/>
</dbReference>
<dbReference type="GeneWiki" id="SPZ1"/>
<dbReference type="GenomeRNAi" id="84654"/>
<dbReference type="Pharos" id="Q9BXG8">
    <property type="development level" value="Tbio"/>
</dbReference>
<dbReference type="PRO" id="PR:Q9BXG8"/>
<dbReference type="Proteomes" id="UP000005640">
    <property type="component" value="Chromosome 5"/>
</dbReference>
<dbReference type="RNAct" id="Q9BXG8">
    <property type="molecule type" value="protein"/>
</dbReference>
<dbReference type="Bgee" id="ENSG00000164299">
    <property type="expression patterns" value="Expressed in sperm and 29 other cell types or tissues"/>
</dbReference>
<dbReference type="ExpressionAtlas" id="Q9BXG8">
    <property type="expression patterns" value="baseline and differential"/>
</dbReference>
<dbReference type="GO" id="GO:0005737">
    <property type="term" value="C:cytoplasm"/>
    <property type="evidence" value="ECO:0007669"/>
    <property type="project" value="UniProtKB-SubCell"/>
</dbReference>
<dbReference type="GO" id="GO:0005634">
    <property type="term" value="C:nucleus"/>
    <property type="evidence" value="ECO:0000318"/>
    <property type="project" value="GO_Central"/>
</dbReference>
<dbReference type="GO" id="GO:0003677">
    <property type="term" value="F:DNA binding"/>
    <property type="evidence" value="ECO:0007669"/>
    <property type="project" value="UniProtKB-KW"/>
</dbReference>
<dbReference type="GO" id="GO:0003700">
    <property type="term" value="F:DNA-binding transcription factor activity"/>
    <property type="evidence" value="ECO:0007669"/>
    <property type="project" value="InterPro"/>
</dbReference>
<dbReference type="InterPro" id="IPR042961">
    <property type="entry name" value="Spz1"/>
</dbReference>
<dbReference type="PANTHER" id="PTHR47889">
    <property type="entry name" value="SPERMATOGENIC LEUCINE ZIPPER PROTEIN 1"/>
    <property type="match status" value="1"/>
</dbReference>
<dbReference type="PANTHER" id="PTHR47889:SF1">
    <property type="entry name" value="SPERMATOGENIC LEUCINE ZIPPER PROTEIN 1"/>
    <property type="match status" value="1"/>
</dbReference>